<gene>
    <name evidence="1" type="primary">uxuA</name>
    <name type="ordered locus">ECP_4658</name>
</gene>
<proteinExistence type="inferred from homology"/>
<reference key="1">
    <citation type="journal article" date="2006" name="Mol. Microbiol.">
        <title>Role of pathogenicity island-associated integrases in the genome plasticity of uropathogenic Escherichia coli strain 536.</title>
        <authorList>
            <person name="Hochhut B."/>
            <person name="Wilde C."/>
            <person name="Balling G."/>
            <person name="Middendorf B."/>
            <person name="Dobrindt U."/>
            <person name="Brzuszkiewicz E."/>
            <person name="Gottschalk G."/>
            <person name="Carniel E."/>
            <person name="Hacker J."/>
        </authorList>
    </citation>
    <scope>NUCLEOTIDE SEQUENCE [LARGE SCALE GENOMIC DNA]</scope>
    <source>
        <strain>536 / UPEC</strain>
    </source>
</reference>
<protein>
    <recommendedName>
        <fullName evidence="1">Mannonate dehydratase</fullName>
        <ecNumber evidence="1">4.2.1.8</ecNumber>
    </recommendedName>
    <alternativeName>
        <fullName evidence="1">D-mannonate hydro-lyase</fullName>
    </alternativeName>
</protein>
<feature type="chain" id="PRO_1000034325" description="Mannonate dehydratase">
    <location>
        <begin position="1"/>
        <end position="394"/>
    </location>
</feature>
<dbReference type="EC" id="4.2.1.8" evidence="1"/>
<dbReference type="EMBL" id="CP000247">
    <property type="protein sequence ID" value="ABG72594.1"/>
    <property type="molecule type" value="Genomic_DNA"/>
</dbReference>
<dbReference type="RefSeq" id="WP_000438582.1">
    <property type="nucleotide sequence ID" value="NC_008253.1"/>
</dbReference>
<dbReference type="SMR" id="Q0T8Y5"/>
<dbReference type="GeneID" id="93777517"/>
<dbReference type="KEGG" id="ecp:ECP_4658"/>
<dbReference type="HOGENOM" id="CLU_058621_2_0_6"/>
<dbReference type="UniPathway" id="UPA00246"/>
<dbReference type="Proteomes" id="UP000009182">
    <property type="component" value="Chromosome"/>
</dbReference>
<dbReference type="GO" id="GO:0008198">
    <property type="term" value="F:ferrous iron binding"/>
    <property type="evidence" value="ECO:0007669"/>
    <property type="project" value="TreeGrafter"/>
</dbReference>
<dbReference type="GO" id="GO:0030145">
    <property type="term" value="F:manganese ion binding"/>
    <property type="evidence" value="ECO:0007669"/>
    <property type="project" value="TreeGrafter"/>
</dbReference>
<dbReference type="GO" id="GO:0008927">
    <property type="term" value="F:mannonate dehydratase activity"/>
    <property type="evidence" value="ECO:0007669"/>
    <property type="project" value="UniProtKB-UniRule"/>
</dbReference>
<dbReference type="GO" id="GO:0042840">
    <property type="term" value="P:D-glucuronate catabolic process"/>
    <property type="evidence" value="ECO:0007669"/>
    <property type="project" value="TreeGrafter"/>
</dbReference>
<dbReference type="FunFam" id="3.20.20.150:FF:000004">
    <property type="entry name" value="Mannonate dehydratase"/>
    <property type="match status" value="1"/>
</dbReference>
<dbReference type="FunFam" id="3.20.20.150:FF:000005">
    <property type="entry name" value="Mannonate dehydratase"/>
    <property type="match status" value="1"/>
</dbReference>
<dbReference type="Gene3D" id="3.20.20.150">
    <property type="entry name" value="Divalent-metal-dependent TIM barrel enzymes"/>
    <property type="match status" value="2"/>
</dbReference>
<dbReference type="HAMAP" id="MF_00106">
    <property type="entry name" value="UxuA"/>
    <property type="match status" value="1"/>
</dbReference>
<dbReference type="InterPro" id="IPR004628">
    <property type="entry name" value="Man_deHydtase"/>
</dbReference>
<dbReference type="InterPro" id="IPR036237">
    <property type="entry name" value="Xyl_isomerase-like_sf"/>
</dbReference>
<dbReference type="NCBIfam" id="NF003027">
    <property type="entry name" value="PRK03906.1"/>
    <property type="match status" value="1"/>
</dbReference>
<dbReference type="NCBIfam" id="TIGR00695">
    <property type="entry name" value="uxuA"/>
    <property type="match status" value="1"/>
</dbReference>
<dbReference type="PANTHER" id="PTHR30387">
    <property type="entry name" value="MANNONATE DEHYDRATASE"/>
    <property type="match status" value="1"/>
</dbReference>
<dbReference type="PANTHER" id="PTHR30387:SF2">
    <property type="entry name" value="MANNONATE DEHYDRATASE"/>
    <property type="match status" value="1"/>
</dbReference>
<dbReference type="Pfam" id="PF03786">
    <property type="entry name" value="UxuA"/>
    <property type="match status" value="1"/>
</dbReference>
<dbReference type="PIRSF" id="PIRSF016049">
    <property type="entry name" value="Man_dehyd"/>
    <property type="match status" value="1"/>
</dbReference>
<dbReference type="SUPFAM" id="SSF51658">
    <property type="entry name" value="Xylose isomerase-like"/>
    <property type="match status" value="1"/>
</dbReference>
<evidence type="ECO:0000255" key="1">
    <source>
        <dbReference type="HAMAP-Rule" id="MF_00106"/>
    </source>
</evidence>
<comment type="function">
    <text evidence="1">Catalyzes the dehydration of D-mannonate.</text>
</comment>
<comment type="catalytic activity">
    <reaction evidence="1">
        <text>D-mannonate = 2-dehydro-3-deoxy-D-gluconate + H2O</text>
        <dbReference type="Rhea" id="RHEA:20097"/>
        <dbReference type="ChEBI" id="CHEBI:15377"/>
        <dbReference type="ChEBI" id="CHEBI:17767"/>
        <dbReference type="ChEBI" id="CHEBI:57990"/>
        <dbReference type="EC" id="4.2.1.8"/>
    </reaction>
</comment>
<comment type="cofactor">
    <cofactor evidence="1">
        <name>Fe(2+)</name>
        <dbReference type="ChEBI" id="CHEBI:29033"/>
    </cofactor>
    <cofactor evidence="1">
        <name>Mn(2+)</name>
        <dbReference type="ChEBI" id="CHEBI:29035"/>
    </cofactor>
</comment>
<comment type="pathway">
    <text evidence="1">Carbohydrate metabolism; pentose and glucuronate interconversion.</text>
</comment>
<comment type="similarity">
    <text evidence="1">Belongs to the mannonate dehydratase family.</text>
</comment>
<keyword id="KW-0408">Iron</keyword>
<keyword id="KW-0456">Lyase</keyword>
<keyword id="KW-0464">Manganese</keyword>
<accession>Q0T8Y5</accession>
<name>UXUA_ECOL5</name>
<sequence length="394" mass="44824">MEQTWRWYGPNDPVSLADVRQAGATGVVTALHHIPNGEVWSVEEILKRKAIVEDAGLVWSVVESVPIHEDIKTHTGNYEQWIANYQQTLRNLAQCGIRTVCYNFMPVLDWTRTDLEYVLPDGSKALRFDQIEFAAFEMHILKRPGAEADYTEEEIAQAAERFATMSDEDKARLTRNIIAGLPGAEEGYTLDQFRKHLELYKDIDKAKLRENFAVFLKAIIPVAEEVGVRMAVHPDDPPRPILGLPRIVSTIEDMQWMVDTVNSMANGFTMCTGSYGVRADNDLVDMIKQFGPRIYFTHLRSTMREDNPKTFHEAAHLNGDVDMYEVVKAIVEEEHRRKAEGKEDLIPMRPDHGHQMLDDLKKKTNPGYSAIGRLKGLAEVRGVELAIQRAFFSR</sequence>
<organism>
    <name type="scientific">Escherichia coli O6:K15:H31 (strain 536 / UPEC)</name>
    <dbReference type="NCBI Taxonomy" id="362663"/>
    <lineage>
        <taxon>Bacteria</taxon>
        <taxon>Pseudomonadati</taxon>
        <taxon>Pseudomonadota</taxon>
        <taxon>Gammaproteobacteria</taxon>
        <taxon>Enterobacterales</taxon>
        <taxon>Enterobacteriaceae</taxon>
        <taxon>Escherichia</taxon>
    </lineage>
</organism>